<dbReference type="EMBL" id="AAFI02000151">
    <property type="protein sequence ID" value="EAL62418.1"/>
    <property type="molecule type" value="Genomic_DNA"/>
</dbReference>
<dbReference type="RefSeq" id="XP_635921.1">
    <property type="nucleotide sequence ID" value="XM_630829.1"/>
</dbReference>
<dbReference type="SMR" id="Q54GP1"/>
<dbReference type="FunCoup" id="Q54GP1">
    <property type="interactions" value="62"/>
</dbReference>
<dbReference type="STRING" id="44689.Q54GP1"/>
<dbReference type="PaxDb" id="44689-DDB0188688"/>
<dbReference type="EnsemblProtists" id="EAL62418">
    <property type="protein sequence ID" value="EAL62418"/>
    <property type="gene ID" value="DDB_G0290025"/>
</dbReference>
<dbReference type="GeneID" id="8627442"/>
<dbReference type="KEGG" id="ddi:DDB_G0290025"/>
<dbReference type="dictyBase" id="DDB_G0290025"/>
<dbReference type="VEuPathDB" id="AmoebaDB:DDB_G0290025"/>
<dbReference type="eggNOG" id="KOG3077">
    <property type="taxonomic scope" value="Eukaryota"/>
</dbReference>
<dbReference type="HOGENOM" id="CLU_047042_0_1_1"/>
<dbReference type="InParanoid" id="Q54GP1"/>
<dbReference type="OMA" id="LWCKFLQ"/>
<dbReference type="PhylomeDB" id="Q54GP1"/>
<dbReference type="Reactome" id="R-DDI-8951664">
    <property type="pathway name" value="Neddylation"/>
</dbReference>
<dbReference type="PRO" id="PR:Q54GP1"/>
<dbReference type="Proteomes" id="UP000002195">
    <property type="component" value="Chromosome 5"/>
</dbReference>
<dbReference type="GO" id="GO:0000151">
    <property type="term" value="C:ubiquitin ligase complex"/>
    <property type="evidence" value="ECO:0000318"/>
    <property type="project" value="GO_Central"/>
</dbReference>
<dbReference type="GO" id="GO:0097602">
    <property type="term" value="F:cullin family protein binding"/>
    <property type="evidence" value="ECO:0000318"/>
    <property type="project" value="GO_Central"/>
</dbReference>
<dbReference type="GO" id="GO:0031624">
    <property type="term" value="F:ubiquitin conjugating enzyme binding"/>
    <property type="evidence" value="ECO:0000318"/>
    <property type="project" value="GO_Central"/>
</dbReference>
<dbReference type="GO" id="GO:0032182">
    <property type="term" value="F:ubiquitin-like protein binding"/>
    <property type="evidence" value="ECO:0000318"/>
    <property type="project" value="GO_Central"/>
</dbReference>
<dbReference type="GO" id="GO:0045116">
    <property type="term" value="P:protein neddylation"/>
    <property type="evidence" value="ECO:0000318"/>
    <property type="project" value="GO_Central"/>
</dbReference>
<dbReference type="CDD" id="cd14350">
    <property type="entry name" value="UBA_DCNL"/>
    <property type="match status" value="1"/>
</dbReference>
<dbReference type="FunFam" id="1.10.238.200:FF:000011">
    <property type="entry name" value="DCN1-like protein 1"/>
    <property type="match status" value="1"/>
</dbReference>
<dbReference type="FunFam" id="1.10.8.10:FF:000124">
    <property type="entry name" value="Defective in cullin neddylation protein 1"/>
    <property type="match status" value="1"/>
</dbReference>
<dbReference type="Gene3D" id="1.10.238.200">
    <property type="entry name" value="Cullin, PONY binding domain"/>
    <property type="match status" value="1"/>
</dbReference>
<dbReference type="Gene3D" id="1.10.8.10">
    <property type="entry name" value="DNA helicase RuvA subunit, C-terminal domain"/>
    <property type="match status" value="1"/>
</dbReference>
<dbReference type="Gene3D" id="1.10.238.10">
    <property type="entry name" value="EF-hand"/>
    <property type="match status" value="1"/>
</dbReference>
<dbReference type="InterPro" id="IPR014764">
    <property type="entry name" value="DCN-prot"/>
</dbReference>
<dbReference type="InterPro" id="IPR042460">
    <property type="entry name" value="DCN1-like_PONY"/>
</dbReference>
<dbReference type="InterPro" id="IPR005176">
    <property type="entry name" value="PONY_dom"/>
</dbReference>
<dbReference type="InterPro" id="IPR009060">
    <property type="entry name" value="UBA-like_sf"/>
</dbReference>
<dbReference type="PANTHER" id="PTHR12281:SF31">
    <property type="entry name" value="DCN1-LIKE PROTEIN 3"/>
    <property type="match status" value="1"/>
</dbReference>
<dbReference type="PANTHER" id="PTHR12281">
    <property type="entry name" value="RP42 RELATED"/>
    <property type="match status" value="1"/>
</dbReference>
<dbReference type="Pfam" id="PF03556">
    <property type="entry name" value="Cullin_binding"/>
    <property type="match status" value="1"/>
</dbReference>
<dbReference type="Pfam" id="PF14555">
    <property type="entry name" value="UBA_4"/>
    <property type="match status" value="1"/>
</dbReference>
<dbReference type="SUPFAM" id="SSF46934">
    <property type="entry name" value="UBA-like"/>
    <property type="match status" value="1"/>
</dbReference>
<dbReference type="PROSITE" id="PS51229">
    <property type="entry name" value="DCUN1"/>
    <property type="match status" value="1"/>
</dbReference>
<gene>
    <name type="ORF">DDB_G0290025</name>
</gene>
<organism>
    <name type="scientific">Dictyostelium discoideum</name>
    <name type="common">Social amoeba</name>
    <dbReference type="NCBI Taxonomy" id="44689"/>
    <lineage>
        <taxon>Eukaryota</taxon>
        <taxon>Amoebozoa</taxon>
        <taxon>Evosea</taxon>
        <taxon>Eumycetozoa</taxon>
        <taxon>Dictyostelia</taxon>
        <taxon>Dictyosteliales</taxon>
        <taxon>Dictyosteliaceae</taxon>
        <taxon>Dictyostelium</taxon>
    </lineage>
</organism>
<reference key="1">
    <citation type="journal article" date="2005" name="Nature">
        <title>The genome of the social amoeba Dictyostelium discoideum.</title>
        <authorList>
            <person name="Eichinger L."/>
            <person name="Pachebat J.A."/>
            <person name="Gloeckner G."/>
            <person name="Rajandream M.A."/>
            <person name="Sucgang R."/>
            <person name="Berriman M."/>
            <person name="Song J."/>
            <person name="Olsen R."/>
            <person name="Szafranski K."/>
            <person name="Xu Q."/>
            <person name="Tunggal B."/>
            <person name="Kummerfeld S."/>
            <person name="Madera M."/>
            <person name="Konfortov B.A."/>
            <person name="Rivero F."/>
            <person name="Bankier A.T."/>
            <person name="Lehmann R."/>
            <person name="Hamlin N."/>
            <person name="Davies R."/>
            <person name="Gaudet P."/>
            <person name="Fey P."/>
            <person name="Pilcher K."/>
            <person name="Chen G."/>
            <person name="Saunders D."/>
            <person name="Sodergren E.J."/>
            <person name="Davis P."/>
            <person name="Kerhornou A."/>
            <person name="Nie X."/>
            <person name="Hall N."/>
            <person name="Anjard C."/>
            <person name="Hemphill L."/>
            <person name="Bason N."/>
            <person name="Farbrother P."/>
            <person name="Desany B."/>
            <person name="Just E."/>
            <person name="Morio T."/>
            <person name="Rost R."/>
            <person name="Churcher C.M."/>
            <person name="Cooper J."/>
            <person name="Haydock S."/>
            <person name="van Driessche N."/>
            <person name="Cronin A."/>
            <person name="Goodhead I."/>
            <person name="Muzny D.M."/>
            <person name="Mourier T."/>
            <person name="Pain A."/>
            <person name="Lu M."/>
            <person name="Harper D."/>
            <person name="Lindsay R."/>
            <person name="Hauser H."/>
            <person name="James K.D."/>
            <person name="Quiles M."/>
            <person name="Madan Babu M."/>
            <person name="Saito T."/>
            <person name="Buchrieser C."/>
            <person name="Wardroper A."/>
            <person name="Felder M."/>
            <person name="Thangavelu M."/>
            <person name="Johnson D."/>
            <person name="Knights A."/>
            <person name="Loulseged H."/>
            <person name="Mungall K.L."/>
            <person name="Oliver K."/>
            <person name="Price C."/>
            <person name="Quail M.A."/>
            <person name="Urushihara H."/>
            <person name="Hernandez J."/>
            <person name="Rabbinowitsch E."/>
            <person name="Steffen D."/>
            <person name="Sanders M."/>
            <person name="Ma J."/>
            <person name="Kohara Y."/>
            <person name="Sharp S."/>
            <person name="Simmonds M.N."/>
            <person name="Spiegler S."/>
            <person name="Tivey A."/>
            <person name="Sugano S."/>
            <person name="White B."/>
            <person name="Walker D."/>
            <person name="Woodward J.R."/>
            <person name="Winckler T."/>
            <person name="Tanaka Y."/>
            <person name="Shaulsky G."/>
            <person name="Schleicher M."/>
            <person name="Weinstock G.M."/>
            <person name="Rosenthal A."/>
            <person name="Cox E.C."/>
            <person name="Chisholm R.L."/>
            <person name="Gibbs R.A."/>
            <person name="Loomis W.F."/>
            <person name="Platzer M."/>
            <person name="Kay R.R."/>
            <person name="Williams J.G."/>
            <person name="Dear P.H."/>
            <person name="Noegel A.A."/>
            <person name="Barrell B.G."/>
            <person name="Kuspa A."/>
        </authorList>
    </citation>
    <scope>NUCLEOTIDE SEQUENCE [LARGE SCALE GENOMIC DNA]</scope>
    <source>
        <strain>AX4</strain>
    </source>
</reference>
<name>DCN1L_DICDI</name>
<sequence length="249" mass="29402">MYRLPADQKLKCTEFMSITEATEAKAIQYLKDASWRTDAAVDNFYSNPSNFANKFDKKAIETIFNKYKDSGEEQISEKLPEFVKDININDEMMELAVLWKFKTKQMGVITKNEFMETMERLRCDNISSLEKQMETVRQQLSSKDLNNNSAFKEFYMFVFDLGKAENQKNVSLQMCIELWTIVLKSKFDNLQIWFDFLNKHHKLAISKDTWNLFLDFVKIANDSITKYDSEGAWPVLIDEFVEYYKENCK</sequence>
<protein>
    <recommendedName>
        <fullName>DCN1-like protein 1</fullName>
    </recommendedName>
    <alternativeName>
        <fullName>Defective in cullin neddylation protein 1-like protein 1</fullName>
    </alternativeName>
</protein>
<evidence type="ECO:0000250" key="1"/>
<evidence type="ECO:0000255" key="2">
    <source>
        <dbReference type="PROSITE-ProRule" id="PRU00574"/>
    </source>
</evidence>
<accession>Q54GP1</accession>
<keyword id="KW-1185">Reference proteome</keyword>
<keyword id="KW-0833">Ubl conjugation pathway</keyword>
<proteinExistence type="inferred from homology"/>
<feature type="chain" id="PRO_0000330840" description="DCN1-like protein 1">
    <location>
        <begin position="1"/>
        <end position="249"/>
    </location>
</feature>
<feature type="domain" description="UBA-like">
    <location>
        <begin position="4"/>
        <end position="49"/>
    </location>
</feature>
<feature type="domain" description="DCUN1" evidence="2">
    <location>
        <begin position="55"/>
        <end position="245"/>
    </location>
</feature>
<comment type="function">
    <text evidence="1">May contribute to neddylation of cullin components of SCF-type E3 ubiquitin ligase complexes. Neddylation of cullins play an essential role in the regulation of SCF-type complexes activity (By similarity).</text>
</comment>